<organism>
    <name type="scientific">Xenopus tropicalis</name>
    <name type="common">Western clawed frog</name>
    <name type="synonym">Silurana tropicalis</name>
    <dbReference type="NCBI Taxonomy" id="8364"/>
    <lineage>
        <taxon>Eukaryota</taxon>
        <taxon>Metazoa</taxon>
        <taxon>Chordata</taxon>
        <taxon>Craniata</taxon>
        <taxon>Vertebrata</taxon>
        <taxon>Euteleostomi</taxon>
        <taxon>Amphibia</taxon>
        <taxon>Batrachia</taxon>
        <taxon>Anura</taxon>
        <taxon>Pipoidea</taxon>
        <taxon>Pipidae</taxon>
        <taxon>Xenopodinae</taxon>
        <taxon>Xenopus</taxon>
        <taxon>Silurana</taxon>
    </lineage>
</organism>
<protein>
    <recommendedName>
        <fullName>Serine protease ami</fullName>
        <ecNumber>3.4.21.-</ecNumber>
    </recommendedName>
</protein>
<gene>
    <name evidence="3" type="primary">ami</name>
</gene>
<keyword id="KW-1015">Disulfide bond</keyword>
<keyword id="KW-0325">Glycoprotein</keyword>
<keyword id="KW-0378">Hydrolase</keyword>
<keyword id="KW-0645">Protease</keyword>
<keyword id="KW-1185">Reference proteome</keyword>
<keyword id="KW-0964">Secreted</keyword>
<keyword id="KW-0720">Serine protease</keyword>
<keyword id="KW-0732">Signal</keyword>
<keyword id="KW-0865">Zymogen</keyword>
<comment type="function">
    <text evidence="1">Probable serine protease.</text>
</comment>
<comment type="subcellular location">
    <subcellularLocation>
        <location evidence="1">Secreted</location>
    </subcellularLocation>
</comment>
<comment type="similarity">
    <text evidence="5">Belongs to the peptidase S1 family.</text>
</comment>
<sequence length="265" mass="29040">MNVSWALLAVVLVLTVATYECRPRGRILGGQDSKAEVRPYMASIQQNGIHQCGGVLIADKWVLSAAHCATNSSNSSLNVMLGAISLSKPEKYKIVVKVLREIPHPLYNSTIKHHDLLLLELSEKVTLSPAVNPLPFQNENIDISAGKRCLVAGWGQMRLTGKKPDTLQELWVPLISRDVCNRRNYYDNEITANMICAGESRKDSCEGDSGGPLVCDGIAVAIVQGGFRKCGNPTKPGIYTLIEPYKSWIMESMYNATLQSNPSPL</sequence>
<feature type="signal peptide" evidence="4">
    <location>
        <begin position="1"/>
        <end position="21"/>
    </location>
</feature>
<feature type="propeptide" id="PRO_0000245787" description="Activation peptide" evidence="4">
    <location>
        <begin position="22"/>
        <end position="26"/>
    </location>
</feature>
<feature type="chain" id="PRO_0000245788" description="Serine protease ami">
    <location>
        <begin position="27"/>
        <end position="265"/>
    </location>
</feature>
<feature type="domain" description="Peptidase S1" evidence="5">
    <location>
        <begin position="27"/>
        <end position="254"/>
    </location>
</feature>
<feature type="active site" description="Charge relay system" evidence="2">
    <location>
        <position position="67"/>
    </location>
</feature>
<feature type="active site" description="Charge relay system" evidence="2">
    <location>
        <position position="115"/>
    </location>
</feature>
<feature type="active site" description="Charge relay system" evidence="2">
    <location>
        <position position="209"/>
    </location>
</feature>
<feature type="glycosylation site" description="N-linked (GlcNAc...) asparagine" evidence="4">
    <location>
        <position position="2"/>
    </location>
</feature>
<feature type="glycosylation site" description="N-linked (GlcNAc...) asparagine" evidence="4">
    <location>
        <position position="71"/>
    </location>
</feature>
<feature type="glycosylation site" description="N-linked (GlcNAc...) asparagine" evidence="4">
    <location>
        <position position="74"/>
    </location>
</feature>
<feature type="glycosylation site" description="N-linked (GlcNAc...) asparagine" evidence="4">
    <location>
        <position position="108"/>
    </location>
</feature>
<feature type="glycosylation site" description="N-linked (GlcNAc...) asparagine" evidence="4">
    <location>
        <position position="255"/>
    </location>
</feature>
<feature type="disulfide bond" evidence="2 5">
    <location>
        <begin position="52"/>
        <end position="68"/>
    </location>
</feature>
<feature type="disulfide bond" evidence="2 5">
    <location>
        <begin position="149"/>
        <end position="215"/>
    </location>
</feature>
<feature type="disulfide bond" evidence="2 5">
    <location>
        <begin position="180"/>
        <end position="196"/>
    </location>
</feature>
<feature type="disulfide bond" evidence="2 5">
    <location>
        <begin position="205"/>
        <end position="230"/>
    </location>
</feature>
<dbReference type="EC" id="3.4.21.-"/>
<dbReference type="EMBL" id="BC064208">
    <property type="protein sequence ID" value="AAH64208.1"/>
    <property type="molecule type" value="mRNA"/>
</dbReference>
<dbReference type="RefSeq" id="NP_989320.1">
    <property type="nucleotide sequence ID" value="NM_203989.1"/>
</dbReference>
<dbReference type="SMR" id="Q6P326"/>
<dbReference type="FunCoup" id="Q6P326">
    <property type="interactions" value="208"/>
</dbReference>
<dbReference type="STRING" id="8364.ENSXETP00000038202"/>
<dbReference type="MEROPS" id="S01.191"/>
<dbReference type="GlyCosmos" id="Q6P326">
    <property type="glycosylation" value="5 sites, No reported glycans"/>
</dbReference>
<dbReference type="PaxDb" id="8364-ENSXETP00000046776"/>
<dbReference type="DNASU" id="394945"/>
<dbReference type="GeneID" id="394945"/>
<dbReference type="KEGG" id="xtr:394945"/>
<dbReference type="AGR" id="Xenbase:XB-GENE-973605"/>
<dbReference type="CTD" id="1675"/>
<dbReference type="Xenbase" id="XB-GENE-973605">
    <property type="gene designation" value="cfd"/>
</dbReference>
<dbReference type="eggNOG" id="KOG3627">
    <property type="taxonomic scope" value="Eukaryota"/>
</dbReference>
<dbReference type="InParanoid" id="Q6P326"/>
<dbReference type="OMA" id="YTRTAPY"/>
<dbReference type="OrthoDB" id="60866at2759"/>
<dbReference type="Reactome" id="R-XTR-114608">
    <property type="pathway name" value="Platelet degranulation"/>
</dbReference>
<dbReference type="Reactome" id="R-XTR-173736">
    <property type="pathway name" value="Alternative complement activation"/>
</dbReference>
<dbReference type="Reactome" id="R-XTR-6798695">
    <property type="pathway name" value="Neutrophil degranulation"/>
</dbReference>
<dbReference type="Proteomes" id="UP000008143">
    <property type="component" value="Chromosome 1"/>
</dbReference>
<dbReference type="Bgee" id="ENSXETG00000021646">
    <property type="expression patterns" value="Expressed in liver and 23 other cell types or tissues"/>
</dbReference>
<dbReference type="GO" id="GO:0005615">
    <property type="term" value="C:extracellular space"/>
    <property type="evidence" value="ECO:0000250"/>
    <property type="project" value="UniProtKB"/>
</dbReference>
<dbReference type="GO" id="GO:0004252">
    <property type="term" value="F:serine-type endopeptidase activity"/>
    <property type="evidence" value="ECO:0007669"/>
    <property type="project" value="InterPro"/>
</dbReference>
<dbReference type="GO" id="GO:0006508">
    <property type="term" value="P:proteolysis"/>
    <property type="evidence" value="ECO:0007669"/>
    <property type="project" value="UniProtKB-KW"/>
</dbReference>
<dbReference type="CDD" id="cd00190">
    <property type="entry name" value="Tryp_SPc"/>
    <property type="match status" value="1"/>
</dbReference>
<dbReference type="FunFam" id="2.40.10.10:FF:000005">
    <property type="entry name" value="Serine protease 37"/>
    <property type="match status" value="1"/>
</dbReference>
<dbReference type="FunFam" id="2.40.10.10:FF:000036">
    <property type="entry name" value="Trypsin beta"/>
    <property type="match status" value="1"/>
</dbReference>
<dbReference type="Gene3D" id="2.40.10.10">
    <property type="entry name" value="Trypsin-like serine proteases"/>
    <property type="match status" value="2"/>
</dbReference>
<dbReference type="InterPro" id="IPR009003">
    <property type="entry name" value="Peptidase_S1_PA"/>
</dbReference>
<dbReference type="InterPro" id="IPR043504">
    <property type="entry name" value="Peptidase_S1_PA_chymotrypsin"/>
</dbReference>
<dbReference type="InterPro" id="IPR001314">
    <property type="entry name" value="Peptidase_S1A"/>
</dbReference>
<dbReference type="InterPro" id="IPR001254">
    <property type="entry name" value="Trypsin_dom"/>
</dbReference>
<dbReference type="InterPro" id="IPR018114">
    <property type="entry name" value="TRYPSIN_HIS"/>
</dbReference>
<dbReference type="InterPro" id="IPR033116">
    <property type="entry name" value="TRYPSIN_SER"/>
</dbReference>
<dbReference type="PANTHER" id="PTHR24271:SF54">
    <property type="entry name" value="COMPLEMENT FACTOR D"/>
    <property type="match status" value="1"/>
</dbReference>
<dbReference type="PANTHER" id="PTHR24271">
    <property type="entry name" value="KALLIKREIN-RELATED"/>
    <property type="match status" value="1"/>
</dbReference>
<dbReference type="Pfam" id="PF00089">
    <property type="entry name" value="Trypsin"/>
    <property type="match status" value="1"/>
</dbReference>
<dbReference type="PRINTS" id="PR00722">
    <property type="entry name" value="CHYMOTRYPSIN"/>
</dbReference>
<dbReference type="SMART" id="SM00020">
    <property type="entry name" value="Tryp_SPc"/>
    <property type="match status" value="1"/>
</dbReference>
<dbReference type="SUPFAM" id="SSF50494">
    <property type="entry name" value="Trypsin-like serine proteases"/>
    <property type="match status" value="1"/>
</dbReference>
<dbReference type="PROSITE" id="PS50240">
    <property type="entry name" value="TRYPSIN_DOM"/>
    <property type="match status" value="1"/>
</dbReference>
<dbReference type="PROSITE" id="PS00134">
    <property type="entry name" value="TRYPSIN_HIS"/>
    <property type="match status" value="1"/>
</dbReference>
<dbReference type="PROSITE" id="PS00135">
    <property type="entry name" value="TRYPSIN_SER"/>
    <property type="match status" value="1"/>
</dbReference>
<name>AMI_XENTR</name>
<proteinExistence type="evidence at transcript level"/>
<evidence type="ECO:0000250" key="1"/>
<evidence type="ECO:0000250" key="2">
    <source>
        <dbReference type="UniProtKB" id="P00746"/>
    </source>
</evidence>
<evidence type="ECO:0000250" key="3">
    <source>
        <dbReference type="UniProtKB" id="Q63ZK0"/>
    </source>
</evidence>
<evidence type="ECO:0000255" key="4"/>
<evidence type="ECO:0000255" key="5">
    <source>
        <dbReference type="PROSITE-ProRule" id="PRU00274"/>
    </source>
</evidence>
<evidence type="ECO:0000312" key="6">
    <source>
        <dbReference type="EMBL" id="AAH64208.1"/>
    </source>
</evidence>
<reference evidence="6" key="1">
    <citation type="submission" date="2003-12" db="EMBL/GenBank/DDBJ databases">
        <authorList>
            <consortium name="NIH - Xenopus Gene Collection (XGC) project"/>
        </authorList>
    </citation>
    <scope>NUCLEOTIDE SEQUENCE [LARGE SCALE MRNA]</scope>
    <source>
        <tissue>Gastrula</tissue>
    </source>
</reference>
<accession>Q6P326</accession>